<dbReference type="EMBL" id="BX294151">
    <property type="protein sequence ID" value="CAD78764.1"/>
    <property type="status" value="ALT_INIT"/>
    <property type="molecule type" value="Genomic_DNA"/>
</dbReference>
<dbReference type="RefSeq" id="NP_869307.1">
    <property type="nucleotide sequence ID" value="NC_005027.1"/>
</dbReference>
<dbReference type="SMR" id="Q7UFB9"/>
<dbReference type="FunCoup" id="Q7UFB9">
    <property type="interactions" value="139"/>
</dbReference>
<dbReference type="STRING" id="243090.RB10211"/>
<dbReference type="EnsemblBacteria" id="CAD78764">
    <property type="protein sequence ID" value="CAD78764"/>
    <property type="gene ID" value="RB10211"/>
</dbReference>
<dbReference type="KEGG" id="rba:RB10211"/>
<dbReference type="PATRIC" id="fig|243090.15.peg.4929"/>
<dbReference type="eggNOG" id="COG0711">
    <property type="taxonomic scope" value="Bacteria"/>
</dbReference>
<dbReference type="HOGENOM" id="CLU_079215_2_0_0"/>
<dbReference type="InParanoid" id="Q7UFB9"/>
<dbReference type="OrthoDB" id="274361at2"/>
<dbReference type="Proteomes" id="UP000001025">
    <property type="component" value="Chromosome"/>
</dbReference>
<dbReference type="GO" id="GO:0005886">
    <property type="term" value="C:plasma membrane"/>
    <property type="evidence" value="ECO:0007669"/>
    <property type="project" value="UniProtKB-SubCell"/>
</dbReference>
<dbReference type="GO" id="GO:0045259">
    <property type="term" value="C:proton-transporting ATP synthase complex"/>
    <property type="evidence" value="ECO:0007669"/>
    <property type="project" value="UniProtKB-KW"/>
</dbReference>
<dbReference type="GO" id="GO:0046933">
    <property type="term" value="F:proton-transporting ATP synthase activity, rotational mechanism"/>
    <property type="evidence" value="ECO:0007669"/>
    <property type="project" value="UniProtKB-UniRule"/>
</dbReference>
<dbReference type="CDD" id="cd06503">
    <property type="entry name" value="ATP-synt_Fo_b"/>
    <property type="match status" value="1"/>
</dbReference>
<dbReference type="HAMAP" id="MF_01398">
    <property type="entry name" value="ATP_synth_b_bprime"/>
    <property type="match status" value="1"/>
</dbReference>
<dbReference type="InterPro" id="IPR002146">
    <property type="entry name" value="ATP_synth_b/b'su_bac/chlpt"/>
</dbReference>
<dbReference type="InterPro" id="IPR005864">
    <property type="entry name" value="ATP_synth_F0_bsu_bac"/>
</dbReference>
<dbReference type="InterPro" id="IPR050059">
    <property type="entry name" value="ATP_synthase_B_chain"/>
</dbReference>
<dbReference type="NCBIfam" id="TIGR01144">
    <property type="entry name" value="ATP_synt_b"/>
    <property type="match status" value="1"/>
</dbReference>
<dbReference type="PANTHER" id="PTHR33445:SF1">
    <property type="entry name" value="ATP SYNTHASE SUBUNIT B"/>
    <property type="match status" value="1"/>
</dbReference>
<dbReference type="PANTHER" id="PTHR33445">
    <property type="entry name" value="ATP SYNTHASE SUBUNIT B', CHLOROPLASTIC"/>
    <property type="match status" value="1"/>
</dbReference>
<dbReference type="Pfam" id="PF00430">
    <property type="entry name" value="ATP-synt_B"/>
    <property type="match status" value="1"/>
</dbReference>
<reference key="1">
    <citation type="journal article" date="2003" name="Proc. Natl. Acad. Sci. U.S.A.">
        <title>Complete genome sequence of the marine planctomycete Pirellula sp. strain 1.</title>
        <authorList>
            <person name="Gloeckner F.O."/>
            <person name="Kube M."/>
            <person name="Bauer M."/>
            <person name="Teeling H."/>
            <person name="Lombardot T."/>
            <person name="Ludwig W."/>
            <person name="Gade D."/>
            <person name="Beck A."/>
            <person name="Borzym K."/>
            <person name="Heitmann K."/>
            <person name="Rabus R."/>
            <person name="Schlesner H."/>
            <person name="Amann R."/>
            <person name="Reinhardt R."/>
        </authorList>
    </citation>
    <scope>NUCLEOTIDE SEQUENCE [LARGE SCALE GENOMIC DNA]</scope>
    <source>
        <strain>DSM 10527 / NCIMB 13988 / SH1</strain>
    </source>
</reference>
<accession>Q7UFB9</accession>
<evidence type="ECO:0000255" key="1">
    <source>
        <dbReference type="HAMAP-Rule" id="MF_01398"/>
    </source>
</evidence>
<evidence type="ECO:0000256" key="2">
    <source>
        <dbReference type="SAM" id="MobiDB-lite"/>
    </source>
</evidence>
<evidence type="ECO:0000305" key="3"/>
<protein>
    <recommendedName>
        <fullName evidence="1">ATP synthase subunit b 2</fullName>
    </recommendedName>
    <alternativeName>
        <fullName evidence="1">ATP synthase F(0) sector subunit b 2</fullName>
    </alternativeName>
    <alternativeName>
        <fullName evidence="1">ATPase subunit I 2</fullName>
    </alternativeName>
    <alternativeName>
        <fullName evidence="1">F-type ATPase subunit b 2</fullName>
        <shortName evidence="1">F-ATPase subunit b 2</shortName>
    </alternativeName>
</protein>
<sequence length="242" mass="25894">MKRLLAISSLTLLASLVLLVVSPARSLAAQDEVTVVDALADAADSEDGDHDHDHEGDDHGHDEAAGDEHGHGDGDHAATPLLSFDGGSAIWNLIIFLCVLAILSKFVWPAVLGGLQAREEKIREDLESAEKASAEAKQMLSDYQLKLDEAASQVQTMLADARRDAEANGQKIVDAAKVEAAAQRERALSDIENAKKVAMAEMAGQTSKLAMQVARSVVGRELSADDHADLIRQSMERLPSQN</sequence>
<gene>
    <name evidence="1" type="primary">atpF2</name>
    <name type="ordered locus">RB10211</name>
</gene>
<proteinExistence type="inferred from homology"/>
<organism>
    <name type="scientific">Rhodopirellula baltica (strain DSM 10527 / NCIMB 13988 / SH1)</name>
    <dbReference type="NCBI Taxonomy" id="243090"/>
    <lineage>
        <taxon>Bacteria</taxon>
        <taxon>Pseudomonadati</taxon>
        <taxon>Planctomycetota</taxon>
        <taxon>Planctomycetia</taxon>
        <taxon>Pirellulales</taxon>
        <taxon>Pirellulaceae</taxon>
        <taxon>Rhodopirellula</taxon>
    </lineage>
</organism>
<comment type="function">
    <text evidence="1">F(1)F(0) ATP synthase produces ATP from ADP in the presence of a proton or sodium gradient. F-type ATPases consist of two structural domains, F(1) containing the extramembraneous catalytic core and F(0) containing the membrane proton channel, linked together by a central stalk and a peripheral stalk. During catalysis, ATP synthesis in the catalytic domain of F(1) is coupled via a rotary mechanism of the central stalk subunits to proton translocation.</text>
</comment>
<comment type="function">
    <text evidence="1">Component of the F(0) channel, it forms part of the peripheral stalk, linking F(1) to F(0).</text>
</comment>
<comment type="subunit">
    <text evidence="1">F-type ATPases have 2 components, F(1) - the catalytic core - and F(0) - the membrane proton channel. F(1) has five subunits: alpha(3), beta(3), gamma(1), delta(1), epsilon(1). F(0) has three main subunits: a(1), b(2) and c(10-14). The alpha and beta chains form an alternating ring which encloses part of the gamma chain. F(1) is attached to F(0) by a central stalk formed by the gamma and epsilon chains, while a peripheral stalk is formed by the delta and b chains.</text>
</comment>
<comment type="subcellular location">
    <subcellularLocation>
        <location evidence="1">Cell inner membrane</location>
        <topology evidence="1">Single-pass membrane protein</topology>
    </subcellularLocation>
</comment>
<comment type="similarity">
    <text evidence="1">Belongs to the ATPase B chain family.</text>
</comment>
<comment type="sequence caution" evidence="3">
    <conflict type="erroneous initiation">
        <sequence resource="EMBL-CDS" id="CAD78764"/>
    </conflict>
</comment>
<name>ATPF2_RHOBA</name>
<keyword id="KW-0066">ATP synthesis</keyword>
<keyword id="KW-0997">Cell inner membrane</keyword>
<keyword id="KW-1003">Cell membrane</keyword>
<keyword id="KW-0138">CF(0)</keyword>
<keyword id="KW-0375">Hydrogen ion transport</keyword>
<keyword id="KW-0406">Ion transport</keyword>
<keyword id="KW-0472">Membrane</keyword>
<keyword id="KW-1185">Reference proteome</keyword>
<keyword id="KW-0812">Transmembrane</keyword>
<keyword id="KW-1133">Transmembrane helix</keyword>
<keyword id="KW-0813">Transport</keyword>
<feature type="chain" id="PRO_0000368719" description="ATP synthase subunit b 2">
    <location>
        <begin position="1"/>
        <end position="242"/>
    </location>
</feature>
<feature type="transmembrane region" description="Helical" evidence="1">
    <location>
        <begin position="4"/>
        <end position="24"/>
    </location>
</feature>
<feature type="region of interest" description="Disordered" evidence="2">
    <location>
        <begin position="43"/>
        <end position="74"/>
    </location>
</feature>
<feature type="compositionally biased region" description="Basic and acidic residues" evidence="2">
    <location>
        <begin position="49"/>
        <end position="74"/>
    </location>
</feature>